<sequence length="207" mass="22076">MTETDGQKDNNQDTAQAAADPVVSKPYIMPDDPEEGSNEALVREAADARDKMLRTLAEMENLRKRTQKEVADARTYGVTSFARDVLDIADNLQRALDAVPADARANAEPGLKALIEGVELTERSLLNALEKNGVKKFDPKGQKFDPNFQQAMYEVPDPSVPAGTVVQVVQAGFTIGDRVLRPALVGVAKGGAKAAPSDGGGETGNLN</sequence>
<gene>
    <name evidence="1" type="primary">grpE</name>
    <name type="ordered locus">RPA0331</name>
</gene>
<organism>
    <name type="scientific">Rhodopseudomonas palustris (strain ATCC BAA-98 / CGA009)</name>
    <dbReference type="NCBI Taxonomy" id="258594"/>
    <lineage>
        <taxon>Bacteria</taxon>
        <taxon>Pseudomonadati</taxon>
        <taxon>Pseudomonadota</taxon>
        <taxon>Alphaproteobacteria</taxon>
        <taxon>Hyphomicrobiales</taxon>
        <taxon>Nitrobacteraceae</taxon>
        <taxon>Rhodopseudomonas</taxon>
    </lineage>
</organism>
<keyword id="KW-0143">Chaperone</keyword>
<keyword id="KW-0963">Cytoplasm</keyword>
<keyword id="KW-0346">Stress response</keyword>
<evidence type="ECO:0000255" key="1">
    <source>
        <dbReference type="HAMAP-Rule" id="MF_01151"/>
    </source>
</evidence>
<evidence type="ECO:0000256" key="2">
    <source>
        <dbReference type="SAM" id="MobiDB-lite"/>
    </source>
</evidence>
<evidence type="ECO:0000305" key="3"/>
<name>GRPE_RHOPA</name>
<proteinExistence type="inferred from homology"/>
<dbReference type="EMBL" id="BX572594">
    <property type="protein sequence ID" value="CAE25775.1"/>
    <property type="status" value="ALT_INIT"/>
    <property type="molecule type" value="Genomic_DNA"/>
</dbReference>
<dbReference type="RefSeq" id="WP_042440699.1">
    <property type="nucleotide sequence ID" value="NZ_CP116810.1"/>
</dbReference>
<dbReference type="SMR" id="Q6NCY6"/>
<dbReference type="STRING" id="258594.RPA0331"/>
<dbReference type="GeneID" id="66891342"/>
<dbReference type="eggNOG" id="COG0576">
    <property type="taxonomic scope" value="Bacteria"/>
</dbReference>
<dbReference type="HOGENOM" id="CLU_057217_6_2_5"/>
<dbReference type="PhylomeDB" id="Q6NCY6"/>
<dbReference type="GO" id="GO:0005737">
    <property type="term" value="C:cytoplasm"/>
    <property type="evidence" value="ECO:0007669"/>
    <property type="project" value="UniProtKB-SubCell"/>
</dbReference>
<dbReference type="GO" id="GO:0000774">
    <property type="term" value="F:adenyl-nucleotide exchange factor activity"/>
    <property type="evidence" value="ECO:0007669"/>
    <property type="project" value="InterPro"/>
</dbReference>
<dbReference type="GO" id="GO:0042803">
    <property type="term" value="F:protein homodimerization activity"/>
    <property type="evidence" value="ECO:0007669"/>
    <property type="project" value="InterPro"/>
</dbReference>
<dbReference type="GO" id="GO:0051087">
    <property type="term" value="F:protein-folding chaperone binding"/>
    <property type="evidence" value="ECO:0007669"/>
    <property type="project" value="InterPro"/>
</dbReference>
<dbReference type="GO" id="GO:0051082">
    <property type="term" value="F:unfolded protein binding"/>
    <property type="evidence" value="ECO:0007669"/>
    <property type="project" value="TreeGrafter"/>
</dbReference>
<dbReference type="GO" id="GO:0006457">
    <property type="term" value="P:protein folding"/>
    <property type="evidence" value="ECO:0007669"/>
    <property type="project" value="InterPro"/>
</dbReference>
<dbReference type="CDD" id="cd00446">
    <property type="entry name" value="GrpE"/>
    <property type="match status" value="1"/>
</dbReference>
<dbReference type="FunFam" id="2.30.22.10:FF:000002">
    <property type="entry name" value="GrpE protein homolog"/>
    <property type="match status" value="1"/>
</dbReference>
<dbReference type="Gene3D" id="3.90.20.20">
    <property type="match status" value="1"/>
</dbReference>
<dbReference type="Gene3D" id="2.30.22.10">
    <property type="entry name" value="Head domain of nucleotide exchange factor GrpE"/>
    <property type="match status" value="1"/>
</dbReference>
<dbReference type="HAMAP" id="MF_01151">
    <property type="entry name" value="GrpE"/>
    <property type="match status" value="1"/>
</dbReference>
<dbReference type="InterPro" id="IPR000740">
    <property type="entry name" value="GrpE"/>
</dbReference>
<dbReference type="InterPro" id="IPR013805">
    <property type="entry name" value="GrpE_coiled_coil"/>
</dbReference>
<dbReference type="InterPro" id="IPR009012">
    <property type="entry name" value="GrpE_head"/>
</dbReference>
<dbReference type="NCBIfam" id="NF010739">
    <property type="entry name" value="PRK14141.1"/>
    <property type="match status" value="1"/>
</dbReference>
<dbReference type="PANTHER" id="PTHR21237">
    <property type="entry name" value="GRPE PROTEIN"/>
    <property type="match status" value="1"/>
</dbReference>
<dbReference type="PANTHER" id="PTHR21237:SF23">
    <property type="entry name" value="GRPE PROTEIN HOMOLOG, MITOCHONDRIAL"/>
    <property type="match status" value="1"/>
</dbReference>
<dbReference type="Pfam" id="PF01025">
    <property type="entry name" value="GrpE"/>
    <property type="match status" value="1"/>
</dbReference>
<dbReference type="PRINTS" id="PR00773">
    <property type="entry name" value="GRPEPROTEIN"/>
</dbReference>
<dbReference type="SUPFAM" id="SSF58014">
    <property type="entry name" value="Coiled-coil domain of nucleotide exchange factor GrpE"/>
    <property type="match status" value="1"/>
</dbReference>
<dbReference type="SUPFAM" id="SSF51064">
    <property type="entry name" value="Head domain of nucleotide exchange factor GrpE"/>
    <property type="match status" value="1"/>
</dbReference>
<dbReference type="PROSITE" id="PS01071">
    <property type="entry name" value="GRPE"/>
    <property type="match status" value="1"/>
</dbReference>
<reference key="1">
    <citation type="journal article" date="2004" name="Nat. Biotechnol.">
        <title>Complete genome sequence of the metabolically versatile photosynthetic bacterium Rhodopseudomonas palustris.</title>
        <authorList>
            <person name="Larimer F.W."/>
            <person name="Chain P."/>
            <person name="Hauser L."/>
            <person name="Lamerdin J.E."/>
            <person name="Malfatti S."/>
            <person name="Do L."/>
            <person name="Land M.L."/>
            <person name="Pelletier D.A."/>
            <person name="Beatty J.T."/>
            <person name="Lang A.S."/>
            <person name="Tabita F.R."/>
            <person name="Gibson J.L."/>
            <person name="Hanson T.E."/>
            <person name="Bobst C."/>
            <person name="Torres y Torres J.L."/>
            <person name="Peres C."/>
            <person name="Harrison F.H."/>
            <person name="Gibson J."/>
            <person name="Harwood C.S."/>
        </authorList>
    </citation>
    <scope>NUCLEOTIDE SEQUENCE [LARGE SCALE GENOMIC DNA]</scope>
    <source>
        <strain>ATCC BAA-98 / CGA009</strain>
    </source>
</reference>
<accession>Q6NCY6</accession>
<feature type="chain" id="PRO_0000113847" description="Protein GrpE">
    <location>
        <begin position="1"/>
        <end position="207"/>
    </location>
</feature>
<feature type="region of interest" description="Disordered" evidence="2">
    <location>
        <begin position="1"/>
        <end position="40"/>
    </location>
</feature>
<feature type="compositionally biased region" description="Basic and acidic residues" evidence="2">
    <location>
        <begin position="1"/>
        <end position="11"/>
    </location>
</feature>
<comment type="function">
    <text evidence="1">Participates actively in the response to hyperosmotic and heat shock by preventing the aggregation of stress-denatured proteins, in association with DnaK and GrpE. It is the nucleotide exchange factor for DnaK and may function as a thermosensor. Unfolded proteins bind initially to DnaJ; upon interaction with the DnaJ-bound protein, DnaK hydrolyzes its bound ATP, resulting in the formation of a stable complex. GrpE releases ADP from DnaK; ATP binding to DnaK triggers the release of the substrate protein, thus completing the reaction cycle. Several rounds of ATP-dependent interactions between DnaJ, DnaK and GrpE are required for fully efficient folding.</text>
</comment>
<comment type="subunit">
    <text evidence="1">Homodimer.</text>
</comment>
<comment type="subcellular location">
    <subcellularLocation>
        <location evidence="1">Cytoplasm</location>
    </subcellularLocation>
</comment>
<comment type="similarity">
    <text evidence="1">Belongs to the GrpE family.</text>
</comment>
<comment type="sequence caution" evidence="3">
    <conflict type="erroneous initiation">
        <sequence resource="EMBL-CDS" id="CAE25775"/>
    </conflict>
</comment>
<protein>
    <recommendedName>
        <fullName evidence="1">Protein GrpE</fullName>
    </recommendedName>
    <alternativeName>
        <fullName evidence="1">HSP-70 cofactor</fullName>
    </alternativeName>
</protein>